<feature type="chain" id="PRO_0000406985" description="1,4-dihydroxy-2-naphthoyl-CoA synthase, peroxisomal">
    <location>
        <begin position="1"/>
        <end position="337"/>
    </location>
</feature>
<feature type="binding site" evidence="1">
    <location>
        <begin position="97"/>
        <end position="98"/>
    </location>
    <ligand>
        <name>substrate</name>
    </ligand>
</feature>
<feature type="binding site" evidence="1">
    <location>
        <position position="133"/>
    </location>
    <ligand>
        <name>substrate</name>
    </ligand>
</feature>
<feature type="binding site" evidence="1">
    <location>
        <begin position="137"/>
        <end position="141"/>
    </location>
    <ligand>
        <name>substrate</name>
    </ligand>
</feature>
<feature type="binding site" evidence="1">
    <location>
        <begin position="181"/>
        <end position="185"/>
    </location>
    <ligand>
        <name>substrate</name>
    </ligand>
</feature>
<feature type="binding site" evidence="1">
    <location>
        <begin position="206"/>
        <end position="208"/>
    </location>
    <ligand>
        <name>hydrogencarbonate</name>
        <dbReference type="ChEBI" id="CHEBI:17544"/>
    </ligand>
</feature>
<feature type="binding site" evidence="1">
    <location>
        <position position="207"/>
    </location>
    <ligand>
        <name>substrate</name>
    </ligand>
</feature>
<feature type="binding site" evidence="1">
    <location>
        <position position="213"/>
    </location>
    <ligand>
        <name>substrate</name>
    </ligand>
</feature>
<feature type="site" description="Important for catalysis" evidence="2">
    <location>
        <position position="215"/>
    </location>
</feature>
<feature type="site" description="Important for catalysis" evidence="2">
    <location>
        <position position="310"/>
    </location>
</feature>
<feature type="mutagenesis site" description="Loss of peroxisomal targeting." evidence="3">
    <original>H</original>
    <variation>V</variation>
    <location>
        <position position="20"/>
    </location>
</feature>
<feature type="sequence conflict" description="In Ref. 3; BAC42141." evidence="4" ref="3">
    <original>G</original>
    <variation>C</variation>
    <location>
        <position position="228"/>
    </location>
</feature>
<name>MENB_ARATH</name>
<gene>
    <name type="primary">MENB</name>
    <name type="ordered locus">At1g60550</name>
    <name type="ORF">F8A5.9</name>
</gene>
<protein>
    <recommendedName>
        <fullName>1,4-dihydroxy-2-naphthoyl-CoA synthase, peroxisomal</fullName>
        <shortName>DHNS</shortName>
        <ecNumber>4.1.3.36</ecNumber>
    </recommendedName>
    <alternativeName>
        <fullName>Enoyl-CoA hydratase/isomerase D</fullName>
        <shortName>ECHID</shortName>
    </alternativeName>
    <alternativeName>
        <fullName>Naphthoate synthase</fullName>
    </alternativeName>
</protein>
<comment type="function">
    <text evidence="1">Involved in the biosynthesis of phylloquinone (vitamin K1). Converts o-succinylbenzoyl-CoA (OSB-CoA) to 1,4-dihydroxy-2-naphthoyl-CoA (DHNA-CoA) (By similarity).</text>
</comment>
<comment type="catalytic activity">
    <reaction>
        <text>2-succinylbenzoyl-CoA + H(+) = 1,4-dihydroxy-2-naphthoyl-CoA + H2O</text>
        <dbReference type="Rhea" id="RHEA:26562"/>
        <dbReference type="ChEBI" id="CHEBI:15377"/>
        <dbReference type="ChEBI" id="CHEBI:15378"/>
        <dbReference type="ChEBI" id="CHEBI:57364"/>
        <dbReference type="ChEBI" id="CHEBI:58897"/>
        <dbReference type="EC" id="4.1.3.36"/>
    </reaction>
</comment>
<comment type="cofactor">
    <cofactor evidence="1">
        <name>hydrogencarbonate</name>
        <dbReference type="ChEBI" id="CHEBI:17544"/>
    </cofactor>
    <text evidence="1">The hydrogencarbonate anion plays the same catalytic role (proton acceptor) as the side-chain carboxylate group of the essential 'Asp-185' found in actinobacteria, archaea, bacteroidetes, and deltaproteobacteria.</text>
</comment>
<comment type="subunit">
    <text evidence="1">Homohexamer.</text>
</comment>
<comment type="subcellular location">
    <subcellularLocation>
        <location evidence="3 5">Peroxisome</location>
    </subcellularLocation>
</comment>
<comment type="similarity">
    <text evidence="4">Belongs to the enoyl-CoA hydratase/isomerase family. MenB subfamily.</text>
</comment>
<comment type="sequence caution" evidence="4">
    <conflict type="erroneous gene model prediction">
        <sequence resource="EMBL-CDS" id="AAB71952"/>
    </conflict>
</comment>
<accession>Q8GYN9</accession>
<accession>B3LF97</accession>
<accession>O22696</accession>
<reference key="1">
    <citation type="journal article" date="2000" name="Nature">
        <title>Sequence and analysis of chromosome 1 of the plant Arabidopsis thaliana.</title>
        <authorList>
            <person name="Theologis A."/>
            <person name="Ecker J.R."/>
            <person name="Palm C.J."/>
            <person name="Federspiel N.A."/>
            <person name="Kaul S."/>
            <person name="White O."/>
            <person name="Alonso J."/>
            <person name="Altafi H."/>
            <person name="Araujo R."/>
            <person name="Bowman C.L."/>
            <person name="Brooks S.Y."/>
            <person name="Buehler E."/>
            <person name="Chan A."/>
            <person name="Chao Q."/>
            <person name="Chen H."/>
            <person name="Cheuk R.F."/>
            <person name="Chin C.W."/>
            <person name="Chung M.K."/>
            <person name="Conn L."/>
            <person name="Conway A.B."/>
            <person name="Conway A.R."/>
            <person name="Creasy T.H."/>
            <person name="Dewar K."/>
            <person name="Dunn P."/>
            <person name="Etgu P."/>
            <person name="Feldblyum T.V."/>
            <person name="Feng J.-D."/>
            <person name="Fong B."/>
            <person name="Fujii C.Y."/>
            <person name="Gill J.E."/>
            <person name="Goldsmith A.D."/>
            <person name="Haas B."/>
            <person name="Hansen N.F."/>
            <person name="Hughes B."/>
            <person name="Huizar L."/>
            <person name="Hunter J.L."/>
            <person name="Jenkins J."/>
            <person name="Johnson-Hopson C."/>
            <person name="Khan S."/>
            <person name="Khaykin E."/>
            <person name="Kim C.J."/>
            <person name="Koo H.L."/>
            <person name="Kremenetskaia I."/>
            <person name="Kurtz D.B."/>
            <person name="Kwan A."/>
            <person name="Lam B."/>
            <person name="Langin-Hooper S."/>
            <person name="Lee A."/>
            <person name="Lee J.M."/>
            <person name="Lenz C.A."/>
            <person name="Li J.H."/>
            <person name="Li Y.-P."/>
            <person name="Lin X."/>
            <person name="Liu S.X."/>
            <person name="Liu Z.A."/>
            <person name="Luros J.S."/>
            <person name="Maiti R."/>
            <person name="Marziali A."/>
            <person name="Militscher J."/>
            <person name="Miranda M."/>
            <person name="Nguyen M."/>
            <person name="Nierman W.C."/>
            <person name="Osborne B.I."/>
            <person name="Pai G."/>
            <person name="Peterson J."/>
            <person name="Pham P.K."/>
            <person name="Rizzo M."/>
            <person name="Rooney T."/>
            <person name="Rowley D."/>
            <person name="Sakano H."/>
            <person name="Salzberg S.L."/>
            <person name="Schwartz J.R."/>
            <person name="Shinn P."/>
            <person name="Southwick A.M."/>
            <person name="Sun H."/>
            <person name="Tallon L.J."/>
            <person name="Tambunga G."/>
            <person name="Toriumi M.J."/>
            <person name="Town C.D."/>
            <person name="Utterback T."/>
            <person name="Van Aken S."/>
            <person name="Vaysberg M."/>
            <person name="Vysotskaia V.S."/>
            <person name="Walker M."/>
            <person name="Wu D."/>
            <person name="Yu G."/>
            <person name="Fraser C.M."/>
            <person name="Venter J.C."/>
            <person name="Davis R.W."/>
        </authorList>
    </citation>
    <scope>NUCLEOTIDE SEQUENCE [LARGE SCALE GENOMIC DNA]</scope>
    <source>
        <strain>cv. Columbia</strain>
    </source>
</reference>
<reference key="2">
    <citation type="journal article" date="2017" name="Plant J.">
        <title>Araport11: a complete reannotation of the Arabidopsis thaliana reference genome.</title>
        <authorList>
            <person name="Cheng C.Y."/>
            <person name="Krishnakumar V."/>
            <person name="Chan A.P."/>
            <person name="Thibaud-Nissen F."/>
            <person name="Schobel S."/>
            <person name="Town C.D."/>
        </authorList>
    </citation>
    <scope>GENOME REANNOTATION</scope>
    <source>
        <strain>cv. Columbia</strain>
    </source>
</reference>
<reference key="3">
    <citation type="journal article" date="2002" name="Science">
        <title>Functional annotation of a full-length Arabidopsis cDNA collection.</title>
        <authorList>
            <person name="Seki M."/>
            <person name="Narusaka M."/>
            <person name="Kamiya A."/>
            <person name="Ishida J."/>
            <person name="Satou M."/>
            <person name="Sakurai T."/>
            <person name="Nakajima M."/>
            <person name="Enju A."/>
            <person name="Akiyama K."/>
            <person name="Oono Y."/>
            <person name="Muramatsu M."/>
            <person name="Hayashizaki Y."/>
            <person name="Kawai J."/>
            <person name="Carninci P."/>
            <person name="Itoh M."/>
            <person name="Ishii Y."/>
            <person name="Arakawa T."/>
            <person name="Shibata K."/>
            <person name="Shinagawa A."/>
            <person name="Shinozaki K."/>
        </authorList>
    </citation>
    <scope>NUCLEOTIDE SEQUENCE [LARGE SCALE MRNA]</scope>
    <source>
        <strain>cv. Columbia</strain>
    </source>
</reference>
<reference key="4">
    <citation type="submission" date="2008-06" db="EMBL/GenBank/DDBJ databases">
        <title>Arabidopsis ORF clones.</title>
        <authorList>
            <person name="de los Reyes C."/>
            <person name="Quan R."/>
            <person name="Chen H."/>
            <person name="Bautista V."/>
            <person name="Kim C.J."/>
            <person name="Ecker J.R."/>
        </authorList>
    </citation>
    <scope>NUCLEOTIDE SEQUENCE [LARGE SCALE MRNA]</scope>
</reference>
<reference key="5">
    <citation type="journal article" date="2007" name="Plant Cell">
        <title>Proteome analysis of Arabidopsis leaf peroxisomes reveals novel targeting peptides, metabolic pathways, and defense mechanisms.</title>
        <authorList>
            <person name="Reumann S."/>
            <person name="Babujee L."/>
            <person name="Ma C."/>
            <person name="Wienkoop S."/>
            <person name="Siemsen T."/>
            <person name="Antonicelli G.E."/>
            <person name="Rasche N."/>
            <person name="Lueder F."/>
            <person name="Weckwerth W."/>
            <person name="Jahn O."/>
        </authorList>
    </citation>
    <scope>SUBCELLULAR LOCATION</scope>
    <scope>IDENTIFICATION BY MASS SPECTROMETRY</scope>
</reference>
<reference key="6">
    <citation type="journal article" date="2010" name="J. Exp. Bot.">
        <title>The proteome map of spinach leaf peroxisomes indicates partial compartmentalization of phylloquinone (vitamin K1) biosynthesis in plant peroxisomes.</title>
        <authorList>
            <person name="Babujee L."/>
            <person name="Wurtz V."/>
            <person name="Ma C."/>
            <person name="Lueder F."/>
            <person name="Soni P."/>
            <person name="van Dorsselaer A."/>
            <person name="Reumann S."/>
        </authorList>
    </citation>
    <scope>SUBCELLULAR LOCATION</scope>
    <scope>MUTAGENESIS OF HIS-20</scope>
</reference>
<keyword id="KW-0413">Isomerase</keyword>
<keyword id="KW-0456">Lyase</keyword>
<keyword id="KW-0576">Peroxisome</keyword>
<keyword id="KW-1185">Reference proteome</keyword>
<proteinExistence type="evidence at protein level"/>
<sequence>MADSNELGSASRRLSVVTNHLIPIGFSPARADSVELCSASSMDDRFHKVHGEVPTHEVVWKKTDFFGEGDNKEFVDIIYEKALDEGIAKITINRPERRNAFRPQTVKELMRAFNDARDDSSVGVIILTGKGTKAFCSGGDQALRTQDGYADPNDVGRLNVLDLQVQIRRLPKPVIAMVAGYAVGGGHILHMVCDLTIAADNAIFGQTGPKVGSFDAGYGSSIMSRLVGPKKAREMWFMTRFYTASEAEKMGLINTVVPLEDLEKETVKWCREILRNSPTAIRVLKAALNAVDDGHAGLQGLGGDATLLFYGTEEATEGRTAYMHRRPPDFSKFHRRP</sequence>
<evidence type="ECO:0000250" key="1"/>
<evidence type="ECO:0000255" key="2"/>
<evidence type="ECO:0000269" key="3">
    <source>
    </source>
</evidence>
<evidence type="ECO:0000305" key="4"/>
<evidence type="ECO:0000305" key="5">
    <source>
    </source>
</evidence>
<dbReference type="EC" id="4.1.3.36"/>
<dbReference type="EMBL" id="AC002292">
    <property type="protein sequence ID" value="AAB71952.1"/>
    <property type="status" value="ALT_SEQ"/>
    <property type="molecule type" value="Genomic_DNA"/>
</dbReference>
<dbReference type="EMBL" id="CP002684">
    <property type="protein sequence ID" value="AEE33696.1"/>
    <property type="molecule type" value="Genomic_DNA"/>
</dbReference>
<dbReference type="EMBL" id="AK117477">
    <property type="protein sequence ID" value="BAC42141.1"/>
    <property type="molecule type" value="mRNA"/>
</dbReference>
<dbReference type="EMBL" id="BT033085">
    <property type="protein sequence ID" value="ACF04808.1"/>
    <property type="molecule type" value="mRNA"/>
</dbReference>
<dbReference type="PIR" id="G96630">
    <property type="entry name" value="G96630"/>
</dbReference>
<dbReference type="SMR" id="Q8GYN9"/>
<dbReference type="FunCoup" id="Q8GYN9">
    <property type="interactions" value="952"/>
</dbReference>
<dbReference type="STRING" id="3702.Q8GYN9"/>
<dbReference type="iPTMnet" id="Q8GYN9"/>
<dbReference type="PaxDb" id="3702-AT1G60550.1"/>
<dbReference type="ProteomicsDB" id="250625"/>
<dbReference type="EnsemblPlants" id="AT1G60550.1">
    <property type="protein sequence ID" value="AT1G60550.1"/>
    <property type="gene ID" value="AT1G60550"/>
</dbReference>
<dbReference type="GeneID" id="842350"/>
<dbReference type="Gramene" id="AT1G60550.1">
    <property type="protein sequence ID" value="AT1G60550.1"/>
    <property type="gene ID" value="AT1G60550"/>
</dbReference>
<dbReference type="KEGG" id="ath:AT1G60550"/>
<dbReference type="Araport" id="AT1G60550"/>
<dbReference type="TAIR" id="AT1G60550">
    <property type="gene designation" value="ECHID"/>
</dbReference>
<dbReference type="eggNOG" id="KOG1680">
    <property type="taxonomic scope" value="Eukaryota"/>
</dbReference>
<dbReference type="HOGENOM" id="CLU_009834_7_7_1"/>
<dbReference type="InParanoid" id="Q8GYN9"/>
<dbReference type="OMA" id="FCDARED"/>
<dbReference type="PhylomeDB" id="Q8GYN9"/>
<dbReference type="PRO" id="PR:Q8GYN9"/>
<dbReference type="Proteomes" id="UP000006548">
    <property type="component" value="Chromosome 1"/>
</dbReference>
<dbReference type="ExpressionAtlas" id="Q8GYN9">
    <property type="expression patterns" value="baseline and differential"/>
</dbReference>
<dbReference type="GO" id="GO:0005777">
    <property type="term" value="C:peroxisome"/>
    <property type="evidence" value="ECO:0000314"/>
    <property type="project" value="UniProtKB"/>
</dbReference>
<dbReference type="GO" id="GO:0008935">
    <property type="term" value="F:1,4-dihydroxy-2-naphthoyl-CoA synthase activity"/>
    <property type="evidence" value="ECO:0000304"/>
    <property type="project" value="UniProtKB"/>
</dbReference>
<dbReference type="GO" id="GO:0016853">
    <property type="term" value="F:isomerase activity"/>
    <property type="evidence" value="ECO:0007669"/>
    <property type="project" value="UniProtKB-KW"/>
</dbReference>
<dbReference type="GO" id="GO:0009234">
    <property type="term" value="P:menaquinone biosynthetic process"/>
    <property type="evidence" value="ECO:0007669"/>
    <property type="project" value="InterPro"/>
</dbReference>
<dbReference type="GO" id="GO:0042372">
    <property type="term" value="P:phylloquinone biosynthetic process"/>
    <property type="evidence" value="ECO:0000304"/>
    <property type="project" value="UniProtKB"/>
</dbReference>
<dbReference type="CDD" id="cd06558">
    <property type="entry name" value="crotonase-like"/>
    <property type="match status" value="1"/>
</dbReference>
<dbReference type="FunFam" id="1.10.12.10:FF:000003">
    <property type="entry name" value="1,4-dihydroxy-2-naphthoyl-CoA synthase"/>
    <property type="match status" value="1"/>
</dbReference>
<dbReference type="FunFam" id="3.90.226.10:FF:000003">
    <property type="entry name" value="1,4-dihydroxy-2-naphthoyl-CoA synthase"/>
    <property type="match status" value="1"/>
</dbReference>
<dbReference type="Gene3D" id="3.90.226.10">
    <property type="entry name" value="2-enoyl-CoA Hydratase, Chain A, domain 1"/>
    <property type="match status" value="1"/>
</dbReference>
<dbReference type="Gene3D" id="1.10.12.10">
    <property type="entry name" value="Lyase 2-enoyl-coa Hydratase, Chain A, domain 2"/>
    <property type="match status" value="1"/>
</dbReference>
<dbReference type="HAMAP" id="MF_01934">
    <property type="entry name" value="MenB"/>
    <property type="match status" value="1"/>
</dbReference>
<dbReference type="InterPro" id="IPR029045">
    <property type="entry name" value="ClpP/crotonase-like_dom_sf"/>
</dbReference>
<dbReference type="InterPro" id="IPR010198">
    <property type="entry name" value="DHNA-CoA_synthase_MenB"/>
</dbReference>
<dbReference type="InterPro" id="IPR018376">
    <property type="entry name" value="Enoyl-CoA_hyd/isom_CS"/>
</dbReference>
<dbReference type="InterPro" id="IPR001753">
    <property type="entry name" value="Enoyl-CoA_hydra/iso"/>
</dbReference>
<dbReference type="InterPro" id="IPR014748">
    <property type="entry name" value="Enoyl-CoA_hydra_C"/>
</dbReference>
<dbReference type="NCBIfam" id="TIGR01929">
    <property type="entry name" value="menB"/>
    <property type="match status" value="1"/>
</dbReference>
<dbReference type="NCBIfam" id="NF005637">
    <property type="entry name" value="PRK07396.1"/>
    <property type="match status" value="1"/>
</dbReference>
<dbReference type="PANTHER" id="PTHR43113:SF1">
    <property type="entry name" value="1,4-DIHYDROXY-2-NAPHTHOYL-COA SYNTHASE, PEROXISOMAL"/>
    <property type="match status" value="1"/>
</dbReference>
<dbReference type="PANTHER" id="PTHR43113">
    <property type="entry name" value="NUCLEOSIDE-DIPHOSPHATE-SUGAR EPIMERASE"/>
    <property type="match status" value="1"/>
</dbReference>
<dbReference type="Pfam" id="PF00378">
    <property type="entry name" value="ECH_1"/>
    <property type="match status" value="1"/>
</dbReference>
<dbReference type="SUPFAM" id="SSF52096">
    <property type="entry name" value="ClpP/crotonase"/>
    <property type="match status" value="1"/>
</dbReference>
<dbReference type="PROSITE" id="PS00166">
    <property type="entry name" value="ENOYL_COA_HYDRATASE"/>
    <property type="match status" value="1"/>
</dbReference>
<organism>
    <name type="scientific">Arabidopsis thaliana</name>
    <name type="common">Mouse-ear cress</name>
    <dbReference type="NCBI Taxonomy" id="3702"/>
    <lineage>
        <taxon>Eukaryota</taxon>
        <taxon>Viridiplantae</taxon>
        <taxon>Streptophyta</taxon>
        <taxon>Embryophyta</taxon>
        <taxon>Tracheophyta</taxon>
        <taxon>Spermatophyta</taxon>
        <taxon>Magnoliopsida</taxon>
        <taxon>eudicotyledons</taxon>
        <taxon>Gunneridae</taxon>
        <taxon>Pentapetalae</taxon>
        <taxon>rosids</taxon>
        <taxon>malvids</taxon>
        <taxon>Brassicales</taxon>
        <taxon>Brassicaceae</taxon>
        <taxon>Camelineae</taxon>
        <taxon>Arabidopsis</taxon>
    </lineage>
</organism>